<sequence>MIQVLLVTLCLAAFPYQGNSIILESGNVNDYEVLYPQKVTALPKGAVQPKYEDTMQYEFKVNGEPVVLHLEKNKGLFSKDYSETHYSSDGRKITTNPPVEDHCYYHGRIQNDADSTASISACNGLKGHFKLQGETYLIEPLKLSDSEAHAVYKYENVEKGDEAPKMCGVTQTNWKSDKPIKKASQLNLTPEQQRFPQRYIELVVVADHRMFTKYNGNLNTIRIWVHELVNTMNVFYRPLNIHVSLTDLEVWSDQDLINVQPAAADTLEAFGDWRETVLLNRISHDNAQLLTAIELDGETIGLANRGTMCDPKLSTGIVQDHSAINLWVAVTMAHEMGHNLGISHDGNQCHCDANSCIMSEELRQQLSFEFSDCSQNQYQTFLTDHNPQCMLNEPLRTDIVSTPVSGNELWETGEESDFDAPANPCCDAETCKLRPGAQCAEGLCCDQCKFMKEGTVCHRAKGDDLDDYCNGISAGCPRNPFHA</sequence>
<keyword id="KW-0106">Calcium</keyword>
<keyword id="KW-1217">Cell adhesion impairing toxin</keyword>
<keyword id="KW-1015">Disulfide bond</keyword>
<keyword id="KW-1206">Fibrinogenolytic toxin</keyword>
<keyword id="KW-1205">Fibrinolytic toxin</keyword>
<keyword id="KW-1199">Hemostasis impairing toxin</keyword>
<keyword id="KW-0378">Hydrolase</keyword>
<keyword id="KW-0479">Metal-binding</keyword>
<keyword id="KW-0482">Metalloprotease</keyword>
<keyword id="KW-1201">Platelet aggregation inhibiting toxin</keyword>
<keyword id="KW-0645">Protease</keyword>
<keyword id="KW-0964">Secreted</keyword>
<keyword id="KW-0732">Signal</keyword>
<keyword id="KW-0800">Toxin</keyword>
<keyword id="KW-0862">Zinc</keyword>
<keyword id="KW-0865">Zymogen</keyword>
<feature type="signal peptide" evidence="3">
    <location>
        <begin position="1"/>
        <end position="20"/>
    </location>
</feature>
<feature type="propeptide" id="PRO_0000407748" evidence="1">
    <location>
        <begin position="21"/>
        <end position="191"/>
    </location>
</feature>
<feature type="chain" id="PRO_0000407749" description="Snake venom metalloproteinase">
    <location>
        <begin position="192"/>
        <end position="394"/>
    </location>
</feature>
<feature type="propeptide" id="PRO_0000407750" evidence="1">
    <location>
        <begin position="395"/>
        <end position="414"/>
    </location>
</feature>
<feature type="chain" id="PRO_0000407751" description="Disintegrin beta subunit">
    <location>
        <begin position="415"/>
        <end position="483"/>
    </location>
</feature>
<feature type="domain" description="Peptidase M12B" evidence="5">
    <location>
        <begin position="198"/>
        <end position="394"/>
    </location>
</feature>
<feature type="domain" description="Disintegrin" evidence="4">
    <location>
        <begin position="402"/>
        <end position="483"/>
    </location>
</feature>
<feature type="short sequence motif" description="Cell attachment site; atypical (KGD)">
    <location>
        <begin position="461"/>
        <end position="463"/>
    </location>
</feature>
<feature type="active site" evidence="5">
    <location>
        <position position="335"/>
    </location>
</feature>
<feature type="binding site" evidence="1">
    <location>
        <position position="201"/>
    </location>
    <ligand>
        <name>Ca(2+)</name>
        <dbReference type="ChEBI" id="CHEBI:29108"/>
    </ligand>
</feature>
<feature type="binding site" evidence="1">
    <location>
        <position position="285"/>
    </location>
    <ligand>
        <name>Ca(2+)</name>
        <dbReference type="ChEBI" id="CHEBI:29108"/>
    </ligand>
</feature>
<feature type="binding site" evidence="5">
    <location>
        <position position="334"/>
    </location>
    <ligand>
        <name>Zn(2+)</name>
        <dbReference type="ChEBI" id="CHEBI:29105"/>
        <note>catalytic</note>
    </ligand>
</feature>
<feature type="binding site" evidence="5">
    <location>
        <position position="338"/>
    </location>
    <ligand>
        <name>Zn(2+)</name>
        <dbReference type="ChEBI" id="CHEBI:29105"/>
        <note>catalytic</note>
    </ligand>
</feature>
<feature type="binding site" evidence="5">
    <location>
        <position position="344"/>
    </location>
    <ligand>
        <name>Zn(2+)</name>
        <dbReference type="ChEBI" id="CHEBI:29105"/>
        <note>catalytic</note>
    </ligand>
</feature>
<feature type="binding site" evidence="1">
    <location>
        <position position="389"/>
    </location>
    <ligand>
        <name>Ca(2+)</name>
        <dbReference type="ChEBI" id="CHEBI:29108"/>
    </ligand>
</feature>
<feature type="binding site" evidence="1">
    <location>
        <position position="392"/>
    </location>
    <ligand>
        <name>Ca(2+)</name>
        <dbReference type="ChEBI" id="CHEBI:29108"/>
    </ligand>
</feature>
<feature type="disulfide bond" evidence="5">
    <location>
        <begin position="309"/>
        <end position="389"/>
    </location>
</feature>
<feature type="disulfide bond" evidence="5">
    <location>
        <begin position="349"/>
        <end position="373"/>
    </location>
</feature>
<feature type="disulfide bond" evidence="5">
    <location>
        <begin position="351"/>
        <end position="356"/>
    </location>
</feature>
<feature type="disulfide bond" evidence="2">
    <location>
        <begin position="425"/>
        <end position="448"/>
    </location>
</feature>
<feature type="disulfide bond" description="Interchain" evidence="2">
    <location>
        <position position="426"/>
    </location>
</feature>
<feature type="disulfide bond" description="Interchain" evidence="2">
    <location>
        <position position="431"/>
    </location>
</feature>
<feature type="disulfide bond" evidence="2">
    <location>
        <begin position="439"/>
        <end position="445"/>
    </location>
</feature>
<feature type="disulfide bond" evidence="2">
    <location>
        <begin position="444"/>
        <end position="469"/>
    </location>
</feature>
<feature type="disulfide bond" evidence="2 4">
    <location>
        <begin position="457"/>
        <end position="476"/>
    </location>
</feature>
<feature type="sequence conflict" description="In Ref. 1; ACJ61245." evidence="7" ref="1">
    <location>
        <begin position="31"/>
        <end position="56"/>
    </location>
</feature>
<feature type="sequence conflict" description="In Ref. 1; ACJ61245." evidence="7" ref="1">
    <original>G</original>
    <variation>E</variation>
    <location>
        <position position="160"/>
    </location>
</feature>
<feature type="sequence conflict" description="In Ref. 1; ACJ61245." evidence="7" ref="1">
    <original>K</original>
    <variation>R</variation>
    <location>
        <position position="178"/>
    </location>
</feature>
<feature type="sequence conflict" description="In Ref. 1; ACJ61245." evidence="7" ref="1">
    <original>D</original>
    <variation>G</variation>
    <location>
        <position position="464"/>
    </location>
</feature>
<protein>
    <recommendedName>
        <fullName>Zinc metalloproteinase/disintegrin VMP-II</fullName>
        <shortName>AplVMP2</shortName>
    </recommendedName>
    <component>
        <recommendedName>
            <fullName>Snake venom metalloproteinase</fullName>
            <shortName>SVMP</shortName>
            <ecNumber>3.4.24.-</ecNumber>
        </recommendedName>
    </component>
    <component>
        <recommendedName>
            <fullName>Disintegrin beta subunit</fullName>
        </recommendedName>
    </component>
</protein>
<reference key="1">
    <citation type="journal article" date="2009" name="Toxicon">
        <title>cDNA cloning, expression and fibrin(ogen)olytic activity of two low-molecular weight snake venom metalloproteinases.</title>
        <authorList>
            <person name="Jia Y."/>
            <person name="Lucena S."/>
            <person name="Cantu E. Jr."/>
            <person name="Sanchez E.E."/>
            <person name="Perez J.C."/>
        </authorList>
    </citation>
    <scope>NUCLEOTIDE SEQUENCE [MRNA]</scope>
    <scope>FUNCTION</scope>
    <scope>ACTIVITY REGULATION</scope>
    <source>
        <tissue>Venom gland</tissue>
    </source>
</reference>
<reference key="2">
    <citation type="journal article" date="2010" name="Toxicon">
        <title>Molecular cloning and characterization of cDNAs encoding metalloproteinases from snake venom glands.</title>
        <authorList>
            <person name="Jia Y."/>
            <person name="Perez J.C."/>
        </authorList>
    </citation>
    <scope>NUCLEOTIDE SEQUENCE [MRNA]</scope>
    <source>
        <tissue>Venom gland</tissue>
    </source>
</reference>
<accession>C9E1S1</accession>
<accession>B7U493</accession>
<name>VM2V2_AGKPL</name>
<comment type="function">
    <molecule>Snake venom metalloproteinase</molecule>
    <text evidence="6">Has fibrinolytic activity. The recombinant enzyme cleaves both alpha- (FGA) and beta-chains (FGB) of fibrinogen, but not the gamma-chain. The recombinant protein does not produce hemorrhage in mice and does not have effect on ADP- or collagen-stimulated platelet aggregation.</text>
</comment>
<comment type="function">
    <molecule>Disintegrin beta subunit</molecule>
    <text evidence="1">Inhibits platelet aggregation induced by ADP, thrombin, platelet-activating factor and collagen. Acts by inhibiting fibrinogen interaction with platelet receptors GPIIb/GPIIIa (ITGA2B/ITGB3) (By similarity).</text>
</comment>
<comment type="cofactor">
    <cofactor evidence="1">
        <name>Zn(2+)</name>
        <dbReference type="ChEBI" id="CHEBI:29105"/>
    </cofactor>
    <text evidence="1">Binds 1 zinc ion per subunit.</text>
</comment>
<comment type="activity regulation">
    <text evidence="6">Inhibited by EDTA and 1,10-phenanthroline, but not by PMSF.</text>
</comment>
<comment type="subunit">
    <text evidence="1">Heterodimer; disulfide-linked (disintegrin).</text>
</comment>
<comment type="subcellular location">
    <subcellularLocation>
        <location evidence="1">Secreted</location>
    </subcellularLocation>
</comment>
<comment type="tissue specificity">
    <text>Expressed by the venom gland.</text>
</comment>
<comment type="miscellaneous">
    <text>The disintegrin belongs to the dimeric disintegrin subfamily.</text>
</comment>
<comment type="similarity">
    <text evidence="7">Belongs to the venom metalloproteinase (M12B) family. P-II subfamily. P-IIe sub-subfamily.</text>
</comment>
<evidence type="ECO:0000250" key="1"/>
<evidence type="ECO:0000250" key="2">
    <source>
        <dbReference type="UniProtKB" id="Q805F6"/>
    </source>
</evidence>
<evidence type="ECO:0000255" key="3"/>
<evidence type="ECO:0000255" key="4">
    <source>
        <dbReference type="PROSITE-ProRule" id="PRU00068"/>
    </source>
</evidence>
<evidence type="ECO:0000255" key="5">
    <source>
        <dbReference type="PROSITE-ProRule" id="PRU00276"/>
    </source>
</evidence>
<evidence type="ECO:0000269" key="6">
    <source>
    </source>
</evidence>
<evidence type="ECO:0000305" key="7"/>
<proteinExistence type="evidence at transcript level"/>
<organism>
    <name type="scientific">Agkistrodon piscivorus leucostoma</name>
    <name type="common">Western cottonmouth</name>
    <name type="synonym">Acontias leucostoma</name>
    <dbReference type="NCBI Taxonomy" id="459671"/>
    <lineage>
        <taxon>Eukaryota</taxon>
        <taxon>Metazoa</taxon>
        <taxon>Chordata</taxon>
        <taxon>Craniata</taxon>
        <taxon>Vertebrata</taxon>
        <taxon>Euteleostomi</taxon>
        <taxon>Lepidosauria</taxon>
        <taxon>Squamata</taxon>
        <taxon>Bifurcata</taxon>
        <taxon>Unidentata</taxon>
        <taxon>Episquamata</taxon>
        <taxon>Toxicofera</taxon>
        <taxon>Serpentes</taxon>
        <taxon>Colubroidea</taxon>
        <taxon>Viperidae</taxon>
        <taxon>Crotalinae</taxon>
        <taxon>Agkistrodon</taxon>
    </lineage>
</organism>
<dbReference type="EC" id="3.4.24.-"/>
<dbReference type="EMBL" id="FJ429180">
    <property type="protein sequence ID" value="ACJ61245.1"/>
    <property type="molecule type" value="mRNA"/>
</dbReference>
<dbReference type="EMBL" id="GQ451442">
    <property type="protein sequence ID" value="ACV83936.1"/>
    <property type="molecule type" value="mRNA"/>
</dbReference>
<dbReference type="SMR" id="C9E1S1"/>
<dbReference type="MEROPS" id="M12.178"/>
<dbReference type="GO" id="GO:0005576">
    <property type="term" value="C:extracellular region"/>
    <property type="evidence" value="ECO:0007669"/>
    <property type="project" value="UniProtKB-SubCell"/>
</dbReference>
<dbReference type="GO" id="GO:0005886">
    <property type="term" value="C:plasma membrane"/>
    <property type="evidence" value="ECO:0007669"/>
    <property type="project" value="TreeGrafter"/>
</dbReference>
<dbReference type="GO" id="GO:0046872">
    <property type="term" value="F:metal ion binding"/>
    <property type="evidence" value="ECO:0007669"/>
    <property type="project" value="UniProtKB-KW"/>
</dbReference>
<dbReference type="GO" id="GO:0004222">
    <property type="term" value="F:metalloendopeptidase activity"/>
    <property type="evidence" value="ECO:0007669"/>
    <property type="project" value="InterPro"/>
</dbReference>
<dbReference type="GO" id="GO:0090729">
    <property type="term" value="F:toxin activity"/>
    <property type="evidence" value="ECO:0007669"/>
    <property type="project" value="UniProtKB-KW"/>
</dbReference>
<dbReference type="GO" id="GO:0006508">
    <property type="term" value="P:proteolysis"/>
    <property type="evidence" value="ECO:0007669"/>
    <property type="project" value="UniProtKB-KW"/>
</dbReference>
<dbReference type="CDD" id="cd04269">
    <property type="entry name" value="ZnMc_adamalysin_II_like"/>
    <property type="match status" value="1"/>
</dbReference>
<dbReference type="FunFam" id="3.40.390.10:FF:000002">
    <property type="entry name" value="Disintegrin and metalloproteinase domain-containing protein 22"/>
    <property type="match status" value="1"/>
</dbReference>
<dbReference type="FunFam" id="4.10.70.10:FF:000005">
    <property type="entry name" value="Zinc metalloproteinase/disintegrin"/>
    <property type="match status" value="1"/>
</dbReference>
<dbReference type="Gene3D" id="3.40.390.10">
    <property type="entry name" value="Collagenase (Catalytic Domain)"/>
    <property type="match status" value="1"/>
</dbReference>
<dbReference type="Gene3D" id="4.10.70.10">
    <property type="entry name" value="Disintegrin domain"/>
    <property type="match status" value="1"/>
</dbReference>
<dbReference type="InterPro" id="IPR001762">
    <property type="entry name" value="Disintegrin_dom"/>
</dbReference>
<dbReference type="InterPro" id="IPR036436">
    <property type="entry name" value="Disintegrin_dom_sf"/>
</dbReference>
<dbReference type="InterPro" id="IPR024079">
    <property type="entry name" value="MetalloPept_cat_dom_sf"/>
</dbReference>
<dbReference type="InterPro" id="IPR001590">
    <property type="entry name" value="Peptidase_M12B"/>
</dbReference>
<dbReference type="InterPro" id="IPR002870">
    <property type="entry name" value="Peptidase_M12B_N"/>
</dbReference>
<dbReference type="InterPro" id="IPR034027">
    <property type="entry name" value="Reprolysin_adamalysin"/>
</dbReference>
<dbReference type="PANTHER" id="PTHR11905">
    <property type="entry name" value="ADAM A DISINTEGRIN AND METALLOPROTEASE DOMAIN"/>
    <property type="match status" value="1"/>
</dbReference>
<dbReference type="PANTHER" id="PTHR11905:SF32">
    <property type="entry name" value="DISINTEGRIN AND METALLOPROTEINASE DOMAIN-CONTAINING PROTEIN 28"/>
    <property type="match status" value="1"/>
</dbReference>
<dbReference type="Pfam" id="PF00200">
    <property type="entry name" value="Disintegrin"/>
    <property type="match status" value="1"/>
</dbReference>
<dbReference type="Pfam" id="PF01562">
    <property type="entry name" value="Pep_M12B_propep"/>
    <property type="match status" value="1"/>
</dbReference>
<dbReference type="Pfam" id="PF01421">
    <property type="entry name" value="Reprolysin"/>
    <property type="match status" value="1"/>
</dbReference>
<dbReference type="PRINTS" id="PR00289">
    <property type="entry name" value="DISINTEGRIN"/>
</dbReference>
<dbReference type="SMART" id="SM00050">
    <property type="entry name" value="DISIN"/>
    <property type="match status" value="1"/>
</dbReference>
<dbReference type="SUPFAM" id="SSF57552">
    <property type="entry name" value="Blood coagulation inhibitor (disintegrin)"/>
    <property type="match status" value="1"/>
</dbReference>
<dbReference type="SUPFAM" id="SSF55486">
    <property type="entry name" value="Metalloproteases ('zincins'), catalytic domain"/>
    <property type="match status" value="1"/>
</dbReference>
<dbReference type="PROSITE" id="PS50215">
    <property type="entry name" value="ADAM_MEPRO"/>
    <property type="match status" value="1"/>
</dbReference>
<dbReference type="PROSITE" id="PS50214">
    <property type="entry name" value="DISINTEGRIN_2"/>
    <property type="match status" value="1"/>
</dbReference>
<dbReference type="PROSITE" id="PS00142">
    <property type="entry name" value="ZINC_PROTEASE"/>
    <property type="match status" value="1"/>
</dbReference>